<dbReference type="EMBL" id="CP001132">
    <property type="protein sequence ID" value="ACH83814.1"/>
    <property type="molecule type" value="Genomic_DNA"/>
</dbReference>
<dbReference type="RefSeq" id="WP_012536837.1">
    <property type="nucleotide sequence ID" value="NC_011206.1"/>
</dbReference>
<dbReference type="SMR" id="B5EJE0"/>
<dbReference type="KEGG" id="afe:Lferr_1592"/>
<dbReference type="eggNOG" id="COG0718">
    <property type="taxonomic scope" value="Bacteria"/>
</dbReference>
<dbReference type="HOGENOM" id="CLU_140930_0_0_6"/>
<dbReference type="GO" id="GO:0043590">
    <property type="term" value="C:bacterial nucleoid"/>
    <property type="evidence" value="ECO:0007669"/>
    <property type="project" value="UniProtKB-UniRule"/>
</dbReference>
<dbReference type="GO" id="GO:0005829">
    <property type="term" value="C:cytosol"/>
    <property type="evidence" value="ECO:0007669"/>
    <property type="project" value="TreeGrafter"/>
</dbReference>
<dbReference type="GO" id="GO:0003677">
    <property type="term" value="F:DNA binding"/>
    <property type="evidence" value="ECO:0007669"/>
    <property type="project" value="UniProtKB-UniRule"/>
</dbReference>
<dbReference type="Gene3D" id="3.30.1310.10">
    <property type="entry name" value="Nucleoid-associated protein YbaB-like domain"/>
    <property type="match status" value="1"/>
</dbReference>
<dbReference type="HAMAP" id="MF_00274">
    <property type="entry name" value="DNA_YbaB_EbfC"/>
    <property type="match status" value="1"/>
</dbReference>
<dbReference type="InterPro" id="IPR036894">
    <property type="entry name" value="YbaB-like_sf"/>
</dbReference>
<dbReference type="InterPro" id="IPR004401">
    <property type="entry name" value="YbaB/EbfC"/>
</dbReference>
<dbReference type="NCBIfam" id="TIGR00103">
    <property type="entry name" value="DNA_YbaB_EbfC"/>
    <property type="match status" value="1"/>
</dbReference>
<dbReference type="PANTHER" id="PTHR33449">
    <property type="entry name" value="NUCLEOID-ASSOCIATED PROTEIN YBAB"/>
    <property type="match status" value="1"/>
</dbReference>
<dbReference type="PANTHER" id="PTHR33449:SF1">
    <property type="entry name" value="NUCLEOID-ASSOCIATED PROTEIN YBAB"/>
    <property type="match status" value="1"/>
</dbReference>
<dbReference type="Pfam" id="PF02575">
    <property type="entry name" value="YbaB_DNA_bd"/>
    <property type="match status" value="1"/>
</dbReference>
<dbReference type="PIRSF" id="PIRSF004555">
    <property type="entry name" value="UCP004555"/>
    <property type="match status" value="1"/>
</dbReference>
<dbReference type="SUPFAM" id="SSF82607">
    <property type="entry name" value="YbaB-like"/>
    <property type="match status" value="1"/>
</dbReference>
<protein>
    <recommendedName>
        <fullName evidence="1">Nucleoid-associated protein Lferr_1592</fullName>
    </recommendedName>
</protein>
<feature type="chain" id="PRO_1000114575" description="Nucleoid-associated protein Lferr_1592">
    <location>
        <begin position="1"/>
        <end position="107"/>
    </location>
</feature>
<keyword id="KW-0963">Cytoplasm</keyword>
<keyword id="KW-0238">DNA-binding</keyword>
<reference key="1">
    <citation type="submission" date="2008-08" db="EMBL/GenBank/DDBJ databases">
        <title>Complete sequence of Acidithiobacillus ferrooxidans ATCC 53993.</title>
        <authorList>
            <person name="Lucas S."/>
            <person name="Copeland A."/>
            <person name="Lapidus A."/>
            <person name="Glavina del Rio T."/>
            <person name="Dalin E."/>
            <person name="Tice H."/>
            <person name="Bruce D."/>
            <person name="Goodwin L."/>
            <person name="Pitluck S."/>
            <person name="Sims D."/>
            <person name="Brettin T."/>
            <person name="Detter J.C."/>
            <person name="Han C."/>
            <person name="Kuske C.R."/>
            <person name="Larimer F."/>
            <person name="Land M."/>
            <person name="Hauser L."/>
            <person name="Kyrpides N."/>
            <person name="Lykidis A."/>
            <person name="Borole A.P."/>
        </authorList>
    </citation>
    <scope>NUCLEOTIDE SEQUENCE [LARGE SCALE GENOMIC DNA]</scope>
    <source>
        <strain>ATCC 53993 / BNL-5-31</strain>
    </source>
</reference>
<proteinExistence type="inferred from homology"/>
<comment type="function">
    <text evidence="1">Binds to DNA and alters its conformation. May be involved in regulation of gene expression, nucleoid organization and DNA protection.</text>
</comment>
<comment type="subunit">
    <text evidence="1">Homodimer.</text>
</comment>
<comment type="subcellular location">
    <subcellularLocation>
        <location evidence="1">Cytoplasm</location>
        <location evidence="1">Nucleoid</location>
    </subcellularLocation>
</comment>
<comment type="similarity">
    <text evidence="1">Belongs to the YbaB/EbfC family.</text>
</comment>
<evidence type="ECO:0000255" key="1">
    <source>
        <dbReference type="HAMAP-Rule" id="MF_00274"/>
    </source>
</evidence>
<sequence>MKGGLGNIMKQAQQLQERLQKTQEELAQVEVQGHAGGNLVEVTMTCRHDVRRVRIDPSLLTDGDQEMLEDLVAAAINDAVRTAEKVSAERMSEVTGGMNIPGMNLPF</sequence>
<name>Y1592_ACIF5</name>
<gene>
    <name type="ordered locus">Lferr_1592</name>
</gene>
<accession>B5EJE0</accession>
<organism>
    <name type="scientific">Acidithiobacillus ferrooxidans (strain ATCC 53993 / BNL-5-31)</name>
    <name type="common">Leptospirillum ferrooxidans (ATCC 53993)</name>
    <dbReference type="NCBI Taxonomy" id="380394"/>
    <lineage>
        <taxon>Bacteria</taxon>
        <taxon>Pseudomonadati</taxon>
        <taxon>Pseudomonadota</taxon>
        <taxon>Acidithiobacillia</taxon>
        <taxon>Acidithiobacillales</taxon>
        <taxon>Acidithiobacillaceae</taxon>
        <taxon>Acidithiobacillus</taxon>
    </lineage>
</organism>